<organism>
    <name type="scientific">Rhodobacter capsulatus (strain ATCC BAA-309 / NBRC 16581 / SB1003)</name>
    <dbReference type="NCBI Taxonomy" id="272942"/>
    <lineage>
        <taxon>Bacteria</taxon>
        <taxon>Pseudomonadati</taxon>
        <taxon>Pseudomonadota</taxon>
        <taxon>Alphaproteobacteria</taxon>
        <taxon>Rhodobacterales</taxon>
        <taxon>Rhodobacter group</taxon>
        <taxon>Rhodobacter</taxon>
    </lineage>
</organism>
<sequence length="444" mass="48692">MQVTQTLNEGLKRGYTITLTGAELDAKVTEKLIEVQPEVEIKGFRKGKVPMAMLRKNFGDRVLGDVLNESVDGAIKDLLDQSGDRPALQPKVEMENGKDWKPGTDAIFTVSYEALPPIPAFDRATVTLERLVVKADEASVTEALENLAKSAQAFEDRKKGTKAKDGDQVVIDFEGFLGDEPFEGGKGEEYPLVLGSNSFIPGFEDQLVGAKAGEDVEVKVTFPAEYGAAHLAGKEATFKCHVHAVKAPKPAEIDDELAKKFGAADLEALKGQVASRLEAEYKGASRAILKRALLDILDAQVKFDLPPSLVEAEAGQIAHQLWHEENPDHHGHDHGAVEPTEEHKTLAERRVRLGLLLAELGRNEKIEVTDAEMTQAVLAAARQYPGHEREFFEFVKGNAQMQQQIRAPLYEEKVIDFIVAGAAVTEKEVSKEELQKAIEALDEL</sequence>
<gene>
    <name type="primary">tig</name>
    <name type="ordered locus">RCAP_rcc02008</name>
</gene>
<name>TIG_RHOCB</name>
<proteinExistence type="inferred from homology"/>
<comment type="function">
    <text evidence="1">Involved in protein export. Acts as a chaperone by maintaining the newly synthesized protein in an open conformation. Functions as a peptidyl-prolyl cis-trans isomerase (By similarity).</text>
</comment>
<comment type="catalytic activity">
    <reaction>
        <text>[protein]-peptidylproline (omega=180) = [protein]-peptidylproline (omega=0)</text>
        <dbReference type="Rhea" id="RHEA:16237"/>
        <dbReference type="Rhea" id="RHEA-COMP:10747"/>
        <dbReference type="Rhea" id="RHEA-COMP:10748"/>
        <dbReference type="ChEBI" id="CHEBI:83833"/>
        <dbReference type="ChEBI" id="CHEBI:83834"/>
        <dbReference type="EC" id="5.2.1.8"/>
    </reaction>
</comment>
<comment type="subcellular location">
    <subcellularLocation>
        <location>Cytoplasm</location>
    </subcellularLocation>
    <text evidence="1">About half TF is bound to the ribosome near the polypeptide exit tunnel while the other half is free in the cytoplasm.</text>
</comment>
<comment type="domain">
    <text evidence="1">Consists of 3 domains; the N-terminus binds the ribosome, the middle domain has PPIase activity, while the C-terminus has intrinsic chaperone activity on its own.</text>
</comment>
<comment type="similarity">
    <text evidence="2">Belongs to the FKBP-type PPIase family. Tig subfamily.</text>
</comment>
<evidence type="ECO:0000250" key="1"/>
<evidence type="ECO:0000305" key="2"/>
<reference key="1">
    <citation type="journal article" date="1997" name="Proc. Natl. Acad. Sci. U.S.A.">
        <title>Sequence of a 189-kb segment of the chromosome of Rhodobacter capsulatus SB1003.</title>
        <authorList>
            <person name="Vlcek C."/>
            <person name="Paces V."/>
            <person name="Maltsev N."/>
            <person name="Paces J."/>
            <person name="Haselkorn R."/>
            <person name="Fonstein M."/>
        </authorList>
    </citation>
    <scope>NUCLEOTIDE SEQUENCE [GENOMIC DNA]</scope>
    <source>
        <strain>ATCC BAA-309 / NBRC 16581 / SB1003</strain>
    </source>
</reference>
<reference key="2">
    <citation type="journal article" date="2010" name="J. Bacteriol.">
        <title>Complete genome sequence of the photosynthetic purple nonsulfur bacterium Rhodobacter capsulatus SB 1003.</title>
        <authorList>
            <person name="Strnad H."/>
            <person name="Lapidus A."/>
            <person name="Paces J."/>
            <person name="Ulbrich P."/>
            <person name="Vlcek C."/>
            <person name="Paces V."/>
            <person name="Haselkorn R."/>
        </authorList>
    </citation>
    <scope>NUCLEOTIDE SEQUENCE [LARGE SCALE GENOMIC DNA]</scope>
    <source>
        <strain>ATCC BAA-309 / NBRC 16581 / SB1003</strain>
    </source>
</reference>
<dbReference type="EC" id="5.2.1.8"/>
<dbReference type="EMBL" id="AF010496">
    <property type="protein sequence ID" value="AAC16219.1"/>
    <property type="molecule type" value="Genomic_DNA"/>
</dbReference>
<dbReference type="EMBL" id="CP001312">
    <property type="protein sequence ID" value="ADE85752.1"/>
    <property type="molecule type" value="Genomic_DNA"/>
</dbReference>
<dbReference type="PIR" id="T03566">
    <property type="entry name" value="T03566"/>
</dbReference>
<dbReference type="RefSeq" id="WP_013067731.1">
    <property type="nucleotide sequence ID" value="NC_014034.1"/>
</dbReference>
<dbReference type="SMR" id="O68129"/>
<dbReference type="STRING" id="272942.RCAP_rcc02008"/>
<dbReference type="GeneID" id="31490872"/>
<dbReference type="KEGG" id="rcp:RCAP_rcc02008"/>
<dbReference type="eggNOG" id="COG0544">
    <property type="taxonomic scope" value="Bacteria"/>
</dbReference>
<dbReference type="HOGENOM" id="CLU_033058_2_2_5"/>
<dbReference type="OrthoDB" id="9767721at2"/>
<dbReference type="Proteomes" id="UP000002361">
    <property type="component" value="Chromosome"/>
</dbReference>
<dbReference type="GO" id="GO:0005737">
    <property type="term" value="C:cytoplasm"/>
    <property type="evidence" value="ECO:0007669"/>
    <property type="project" value="UniProtKB-SubCell"/>
</dbReference>
<dbReference type="GO" id="GO:0003755">
    <property type="term" value="F:peptidyl-prolyl cis-trans isomerase activity"/>
    <property type="evidence" value="ECO:0007669"/>
    <property type="project" value="UniProtKB-UniRule"/>
</dbReference>
<dbReference type="GO" id="GO:0044183">
    <property type="term" value="F:protein folding chaperone"/>
    <property type="evidence" value="ECO:0007669"/>
    <property type="project" value="TreeGrafter"/>
</dbReference>
<dbReference type="GO" id="GO:0043022">
    <property type="term" value="F:ribosome binding"/>
    <property type="evidence" value="ECO:0007669"/>
    <property type="project" value="TreeGrafter"/>
</dbReference>
<dbReference type="GO" id="GO:0051083">
    <property type="term" value="P:'de novo' cotranslational protein folding"/>
    <property type="evidence" value="ECO:0007669"/>
    <property type="project" value="TreeGrafter"/>
</dbReference>
<dbReference type="GO" id="GO:0051301">
    <property type="term" value="P:cell division"/>
    <property type="evidence" value="ECO:0007669"/>
    <property type="project" value="UniProtKB-KW"/>
</dbReference>
<dbReference type="GO" id="GO:0061077">
    <property type="term" value="P:chaperone-mediated protein folding"/>
    <property type="evidence" value="ECO:0007669"/>
    <property type="project" value="TreeGrafter"/>
</dbReference>
<dbReference type="GO" id="GO:0015031">
    <property type="term" value="P:protein transport"/>
    <property type="evidence" value="ECO:0007669"/>
    <property type="project" value="UniProtKB-UniRule"/>
</dbReference>
<dbReference type="GO" id="GO:0043335">
    <property type="term" value="P:protein unfolding"/>
    <property type="evidence" value="ECO:0007669"/>
    <property type="project" value="TreeGrafter"/>
</dbReference>
<dbReference type="FunFam" id="3.10.50.40:FF:000001">
    <property type="entry name" value="Trigger factor"/>
    <property type="match status" value="1"/>
</dbReference>
<dbReference type="Gene3D" id="3.10.50.40">
    <property type="match status" value="1"/>
</dbReference>
<dbReference type="Gene3D" id="3.30.70.1050">
    <property type="entry name" value="Trigger factor ribosome-binding domain"/>
    <property type="match status" value="1"/>
</dbReference>
<dbReference type="Gene3D" id="1.10.3120.10">
    <property type="entry name" value="Trigger factor, C-terminal domain"/>
    <property type="match status" value="1"/>
</dbReference>
<dbReference type="HAMAP" id="MF_00303">
    <property type="entry name" value="Trigger_factor_Tig"/>
    <property type="match status" value="1"/>
</dbReference>
<dbReference type="InterPro" id="IPR046357">
    <property type="entry name" value="PPIase_dom_sf"/>
</dbReference>
<dbReference type="InterPro" id="IPR001179">
    <property type="entry name" value="PPIase_FKBP_dom"/>
</dbReference>
<dbReference type="InterPro" id="IPR005215">
    <property type="entry name" value="Trig_fac"/>
</dbReference>
<dbReference type="InterPro" id="IPR008880">
    <property type="entry name" value="Trigger_fac_C"/>
</dbReference>
<dbReference type="InterPro" id="IPR037041">
    <property type="entry name" value="Trigger_fac_C_sf"/>
</dbReference>
<dbReference type="InterPro" id="IPR008881">
    <property type="entry name" value="Trigger_fac_ribosome-bd_bac"/>
</dbReference>
<dbReference type="InterPro" id="IPR036611">
    <property type="entry name" value="Trigger_fac_ribosome-bd_sf"/>
</dbReference>
<dbReference type="InterPro" id="IPR027304">
    <property type="entry name" value="Trigger_fact/SurA_dom_sf"/>
</dbReference>
<dbReference type="NCBIfam" id="TIGR00115">
    <property type="entry name" value="tig"/>
    <property type="match status" value="1"/>
</dbReference>
<dbReference type="PANTHER" id="PTHR30560">
    <property type="entry name" value="TRIGGER FACTOR CHAPERONE AND PEPTIDYL-PROLYL CIS/TRANS ISOMERASE"/>
    <property type="match status" value="1"/>
</dbReference>
<dbReference type="PANTHER" id="PTHR30560:SF3">
    <property type="entry name" value="TRIGGER FACTOR-LIKE PROTEIN TIG, CHLOROPLASTIC"/>
    <property type="match status" value="1"/>
</dbReference>
<dbReference type="Pfam" id="PF00254">
    <property type="entry name" value="FKBP_C"/>
    <property type="match status" value="1"/>
</dbReference>
<dbReference type="Pfam" id="PF05698">
    <property type="entry name" value="Trigger_C"/>
    <property type="match status" value="1"/>
</dbReference>
<dbReference type="Pfam" id="PF05697">
    <property type="entry name" value="Trigger_N"/>
    <property type="match status" value="1"/>
</dbReference>
<dbReference type="PIRSF" id="PIRSF003095">
    <property type="entry name" value="Trigger_factor"/>
    <property type="match status" value="1"/>
</dbReference>
<dbReference type="SUPFAM" id="SSF54534">
    <property type="entry name" value="FKBP-like"/>
    <property type="match status" value="1"/>
</dbReference>
<dbReference type="SUPFAM" id="SSF109998">
    <property type="entry name" value="Triger factor/SurA peptide-binding domain-like"/>
    <property type="match status" value="1"/>
</dbReference>
<dbReference type="SUPFAM" id="SSF102735">
    <property type="entry name" value="Trigger factor ribosome-binding domain"/>
    <property type="match status" value="1"/>
</dbReference>
<dbReference type="PROSITE" id="PS50059">
    <property type="entry name" value="FKBP_PPIASE"/>
    <property type="match status" value="1"/>
</dbReference>
<accession>O68129</accession>
<accession>D5AUW3</accession>
<feature type="chain" id="PRO_0000179414" description="Trigger factor">
    <location>
        <begin position="1"/>
        <end position="444"/>
    </location>
</feature>
<feature type="domain" description="PPIase FKBP-type">
    <location>
        <begin position="166"/>
        <end position="251"/>
    </location>
</feature>
<keyword id="KW-0131">Cell cycle</keyword>
<keyword id="KW-0132">Cell division</keyword>
<keyword id="KW-0143">Chaperone</keyword>
<keyword id="KW-0963">Cytoplasm</keyword>
<keyword id="KW-0413">Isomerase</keyword>
<keyword id="KW-1185">Reference proteome</keyword>
<keyword id="KW-0697">Rotamase</keyword>
<protein>
    <recommendedName>
        <fullName>Trigger factor</fullName>
        <shortName>TF</shortName>
        <ecNumber>5.2.1.8</ecNumber>
    </recommendedName>
    <alternativeName>
        <fullName>PPIase</fullName>
    </alternativeName>
</protein>